<evidence type="ECO:0000250" key="1">
    <source>
        <dbReference type="UniProtKB" id="P03901"/>
    </source>
</evidence>
<evidence type="ECO:0000250" key="2">
    <source>
        <dbReference type="UniProtKB" id="P03902"/>
    </source>
</evidence>
<evidence type="ECO:0000255" key="3"/>
<evidence type="ECO:0000305" key="4"/>
<comment type="function">
    <text evidence="1">Core subunit of the mitochondrial membrane respiratory chain NADH dehydrogenase (Complex I) which catalyzes electron transfer from NADH through the respiratory chain, using ubiquinone as an electron acceptor. Part of the enzyme membrane arm which is embedded in the lipid bilayer and involved in proton translocation.</text>
</comment>
<comment type="catalytic activity">
    <reaction evidence="1">
        <text>a ubiquinone + NADH + 5 H(+)(in) = a ubiquinol + NAD(+) + 4 H(+)(out)</text>
        <dbReference type="Rhea" id="RHEA:29091"/>
        <dbReference type="Rhea" id="RHEA-COMP:9565"/>
        <dbReference type="Rhea" id="RHEA-COMP:9566"/>
        <dbReference type="ChEBI" id="CHEBI:15378"/>
        <dbReference type="ChEBI" id="CHEBI:16389"/>
        <dbReference type="ChEBI" id="CHEBI:17976"/>
        <dbReference type="ChEBI" id="CHEBI:57540"/>
        <dbReference type="ChEBI" id="CHEBI:57945"/>
        <dbReference type="EC" id="7.1.1.2"/>
    </reaction>
    <physiologicalReaction direction="left-to-right" evidence="1">
        <dbReference type="Rhea" id="RHEA:29092"/>
    </physiologicalReaction>
</comment>
<comment type="subunit">
    <text evidence="2">Core subunit of respiratory chain NADH dehydrogenase (Complex I) which is composed of 45 different subunits.</text>
</comment>
<comment type="subcellular location">
    <subcellularLocation>
        <location evidence="2">Mitochondrion inner membrane</location>
        <topology evidence="3">Multi-pass membrane protein</topology>
    </subcellularLocation>
</comment>
<comment type="similarity">
    <text evidence="4">Belongs to the complex I subunit 4L family.</text>
</comment>
<feature type="chain" id="PRO_0000275094" description="NADH-ubiquinone oxidoreductase chain 4L">
    <location>
        <begin position="1"/>
        <end position="98"/>
    </location>
</feature>
<feature type="transmembrane region" description="Helical" evidence="3">
    <location>
        <begin position="1"/>
        <end position="21"/>
    </location>
</feature>
<feature type="transmembrane region" description="Helical" evidence="3">
    <location>
        <begin position="29"/>
        <end position="49"/>
    </location>
</feature>
<feature type="transmembrane region" description="Helical" evidence="3">
    <location>
        <begin position="61"/>
        <end position="81"/>
    </location>
</feature>
<feature type="sequence conflict" description="In Ref. 1; AAQ93777." evidence="4" ref="1">
    <original>T</original>
    <variation>A</variation>
    <location>
        <position position="45"/>
    </location>
</feature>
<feature type="sequence conflict" description="In Ref. 1; AAQ93777." evidence="4" ref="1">
    <original>L</original>
    <variation>S</variation>
    <location>
        <position position="76"/>
    </location>
</feature>
<geneLocation type="mitochondrion"/>
<gene>
    <name type="primary">MT-ND4L</name>
    <name type="synonym">MTND4L</name>
    <name type="synonym">NADH4L</name>
    <name type="synonym">ND4L</name>
</gene>
<dbReference type="EC" id="7.1.1.2"/>
<dbReference type="EMBL" id="AM181036">
    <property type="protein sequence ID" value="CAJ57139.1"/>
    <property type="molecule type" value="Genomic_DNA"/>
</dbReference>
<dbReference type="EMBL" id="AY377238">
    <property type="protein sequence ID" value="AAQ93777.1"/>
    <property type="molecule type" value="Genomic_DNA"/>
</dbReference>
<dbReference type="RefSeq" id="YP_778924.1">
    <property type="nucleotide sequence ID" value="NC_008433.1"/>
</dbReference>
<dbReference type="SMR" id="Q08GV9"/>
<dbReference type="GeneID" id="4355912"/>
<dbReference type="CTD" id="4539"/>
<dbReference type="GO" id="GO:0005743">
    <property type="term" value="C:mitochondrial inner membrane"/>
    <property type="evidence" value="ECO:0000250"/>
    <property type="project" value="UniProtKB"/>
</dbReference>
<dbReference type="GO" id="GO:0045271">
    <property type="term" value="C:respiratory chain complex I"/>
    <property type="evidence" value="ECO:0000250"/>
    <property type="project" value="UniProtKB"/>
</dbReference>
<dbReference type="GO" id="GO:0008137">
    <property type="term" value="F:NADH dehydrogenase (ubiquinone) activity"/>
    <property type="evidence" value="ECO:0000250"/>
    <property type="project" value="UniProtKB"/>
</dbReference>
<dbReference type="GO" id="GO:0042773">
    <property type="term" value="P:ATP synthesis coupled electron transport"/>
    <property type="evidence" value="ECO:0007669"/>
    <property type="project" value="InterPro"/>
</dbReference>
<dbReference type="FunFam" id="1.10.287.3510:FF:000002">
    <property type="entry name" value="NADH-ubiquinone oxidoreductase chain 4L"/>
    <property type="match status" value="1"/>
</dbReference>
<dbReference type="Gene3D" id="1.10.287.3510">
    <property type="match status" value="1"/>
</dbReference>
<dbReference type="InterPro" id="IPR001133">
    <property type="entry name" value="NADH_UbQ_OxRdtase_chain4L/K"/>
</dbReference>
<dbReference type="InterPro" id="IPR039428">
    <property type="entry name" value="NUOK/Mnh_C1-like"/>
</dbReference>
<dbReference type="PANTHER" id="PTHR11434:SF0">
    <property type="entry name" value="NADH-UBIQUINONE OXIDOREDUCTASE CHAIN 4L"/>
    <property type="match status" value="1"/>
</dbReference>
<dbReference type="PANTHER" id="PTHR11434">
    <property type="entry name" value="NADH-UBIQUINONE OXIDOREDUCTASE SUBUNIT ND4L"/>
    <property type="match status" value="1"/>
</dbReference>
<dbReference type="Pfam" id="PF00420">
    <property type="entry name" value="Oxidored_q2"/>
    <property type="match status" value="1"/>
</dbReference>
<proteinExistence type="inferred from homology"/>
<name>NU4LM_PUSHI</name>
<accession>Q08GV9</accession>
<accession>Q679A6</accession>
<sequence length="98" mass="10907">MSMVYANIFLAFIMSLMGLLMYRSHLMSSLLCLEGMMLSLFVMMTVTILNNHFTLANMAPIILLVFAACEAALGLLLLVMVSNTYGTDYVQNLNLLQC</sequence>
<keyword id="KW-0249">Electron transport</keyword>
<keyword id="KW-0472">Membrane</keyword>
<keyword id="KW-0496">Mitochondrion</keyword>
<keyword id="KW-0999">Mitochondrion inner membrane</keyword>
<keyword id="KW-0520">NAD</keyword>
<keyword id="KW-0679">Respiratory chain</keyword>
<keyword id="KW-1278">Translocase</keyword>
<keyword id="KW-0812">Transmembrane</keyword>
<keyword id="KW-1133">Transmembrane helix</keyword>
<keyword id="KW-0813">Transport</keyword>
<keyword id="KW-0830">Ubiquinone</keyword>
<reference key="1">
    <citation type="journal article" date="2004" name="Mol. Phylogenet. Evol.">
        <title>A phylogeny of the extant Phocidae inferred from complete mitochondrial DNA coding regions.</title>
        <authorList>
            <person name="Davis C.S."/>
            <person name="Delisle I."/>
            <person name="Stirling I."/>
            <person name="Siniff D.B."/>
            <person name="Strobeck C."/>
        </authorList>
    </citation>
    <scope>NUCLEOTIDE SEQUENCE [GENOMIC DNA]</scope>
</reference>
<reference key="2">
    <citation type="journal article" date="2006" name="Mol. Phylogenet. Evol.">
        <title>Pinniped phylogeny and a new hypothesis for their origin and dispersal.</title>
        <authorList>
            <person name="Arnason U."/>
            <person name="Gullberg A."/>
            <person name="Janke A."/>
            <person name="Kullberg M."/>
            <person name="Lehman N."/>
            <person name="Petrov E.A."/>
            <person name="Vainola R."/>
        </authorList>
    </citation>
    <scope>NUCLEOTIDE SEQUENCE [GENOMIC DNA]</scope>
</reference>
<organism>
    <name type="scientific">Pusa hispida</name>
    <name type="common">Ringed seal</name>
    <name type="synonym">Phoca hispida</name>
    <dbReference type="NCBI Taxonomy" id="9718"/>
    <lineage>
        <taxon>Eukaryota</taxon>
        <taxon>Metazoa</taxon>
        <taxon>Chordata</taxon>
        <taxon>Craniata</taxon>
        <taxon>Vertebrata</taxon>
        <taxon>Euteleostomi</taxon>
        <taxon>Mammalia</taxon>
        <taxon>Eutheria</taxon>
        <taxon>Laurasiatheria</taxon>
        <taxon>Carnivora</taxon>
        <taxon>Caniformia</taxon>
        <taxon>Pinnipedia</taxon>
        <taxon>Phocidae</taxon>
        <taxon>Phocinae</taxon>
        <taxon>Pusa</taxon>
    </lineage>
</organism>
<protein>
    <recommendedName>
        <fullName>NADH-ubiquinone oxidoreductase chain 4L</fullName>
        <ecNumber>7.1.1.2</ecNumber>
    </recommendedName>
    <alternativeName>
        <fullName>NADH dehydrogenase subunit 4L</fullName>
    </alternativeName>
</protein>